<name>PELP1_RAT</name>
<sequence>MAAAVLSGPTTGSPAGAPGGPGGLSAAGSGPRLRLLLLESVSGLLQPRTGSHVAPVHPPIQWAPYLPGLMCLLRLHGTAGGAQNLSALGALVNLSNAHLSSIKTRFEGLCLLSLLVGESPTELFQQHCVSWLRSIQQVLQSQDSPPTMELAVAILRDLLRYASQLPTLFRDISTNHLPGLLTSLLGLRPQCEQSALEGMKACVTYFPRACGFLKGKLASFFLSRLDSLNPQLQQLACECYSRLPSLGAGFSQGLKHTENWEQELHSLLTSLHSLLGSLFEETETAPVQSEGPGVEMLLSPSEDDNTHVLLQLWQRFSGLARCLGLMLSSEFGAPVSVPVQEILDLICRILGISSKNINLLGDGPLRLLLLPSLHLEALDLLSALILACGGRLLRFGALISRLLPQVLNTWSTGRDALAPGQERPYSTIRTKVYAILELWVQVCGASAGMLQGGASGEALLTHLLSDISPPADALKLCSTRGSSDGGLQSGKPSAPKKLKLDMGEALAPPSQRKGDRNADSDVCAAALRGLSRTILMCGPLVKEETHRRLHDLVLPLVMSVQQGEVLGSSPYNSSCCRLELYRLLLALLLAPSPRCPPPLSCALKAFSLGQWEDSLEVSSFCSEALVTCSALTHPRVPPLQSSGPACPTPAPVPPPEAPSSFRAPAFHTPGPMPSIGALPSPGPVPSAGPIPTVGSMSSAGSVPSTGPVPSRPGPPATANHLGLAVPGLVSVPPRLLPGSENHRAGSGEDPVLAPSGTPPPSIPPDETFGGRVPRPAFVHYDKEEASDVEISLESDSDDSVVIVPEGLPSLPPPPSGTPPPVAPIGPPTASPPVPAKEDSEELPATPGPLPPPPPPPPPVSGPVTLPPPQLVPEGTPGGGGPTAMEEDLTVININSSDEEEEEEEEEEEEDEDVEEEDFEEEEEDEEEYFEEEEEEEEFEEEFEEEEGELEEEEEEEEEELEEVEDVEFGSAGEVEEGGPPPPTLPPALPPTDSPKVQPEAEPEPGLLLEVEEPGAEDGPGPEIAPTLAPEVLPSQEEVEREGESPTAGPPQELVEEESSAPPTLLEEGTEGGGDKVPPPPETPAQEEMETETEASAPQGKEQDDTAAMLADFIDCPPDDEKPPPATEPDS</sequence>
<feature type="initiator methionine" description="Removed" evidence="1">
    <location>
        <position position="1"/>
    </location>
</feature>
<feature type="chain" id="PRO_0000252138" description="Proline-, glutamic acid- and leucine-rich protein 1">
    <location>
        <begin position="2"/>
        <end position="1130"/>
    </location>
</feature>
<feature type="region of interest" description="Disordered" evidence="3">
    <location>
        <begin position="1"/>
        <end position="24"/>
    </location>
</feature>
<feature type="region of interest" description="Required for modulation of ESR1 transcriptional activity" evidence="1">
    <location>
        <begin position="2"/>
        <end position="80"/>
    </location>
</feature>
<feature type="region of interest" description="Required for modulation of ESR1 transcriptional activity" evidence="1">
    <location>
        <begin position="121"/>
        <end position="189"/>
    </location>
</feature>
<feature type="region of interest" description="Disordered" evidence="3">
    <location>
        <begin position="639"/>
        <end position="773"/>
    </location>
</feature>
<feature type="region of interest" description="Disordered" evidence="3">
    <location>
        <begin position="785"/>
        <end position="1130"/>
    </location>
</feature>
<feature type="short sequence motif" description="LXXLL motif 1">
    <location>
        <begin position="33"/>
        <end position="37"/>
    </location>
</feature>
<feature type="short sequence motif" description="LXXLL motif 2">
    <location>
        <begin position="69"/>
        <end position="73"/>
    </location>
</feature>
<feature type="short sequence motif" description="LXXLL motif 3">
    <location>
        <begin position="111"/>
        <end position="115"/>
    </location>
</feature>
<feature type="short sequence motif" description="LXXLL motif 4">
    <location>
        <begin position="155"/>
        <end position="159"/>
    </location>
</feature>
<feature type="short sequence motif" description="LXXLL motif 5">
    <location>
        <begin position="177"/>
        <end position="181"/>
    </location>
</feature>
<feature type="short sequence motif" description="LXXLL motif 6">
    <location>
        <begin position="264"/>
        <end position="268"/>
    </location>
</feature>
<feature type="short sequence motif" description="LXXLL motif 7">
    <location>
        <begin position="271"/>
        <end position="275"/>
    </location>
</feature>
<feature type="short sequence motif" description="LXXLL motif 8">
    <location>
        <begin position="365"/>
        <end position="369"/>
    </location>
</feature>
<feature type="short sequence motif" description="LXXLL motif 9">
    <location>
        <begin position="460"/>
        <end position="464"/>
    </location>
</feature>
<feature type="short sequence motif" description="LXXLL motif 10">
    <location>
        <begin position="580"/>
        <end position="584"/>
    </location>
</feature>
<feature type="short sequence motif" description="LXXLL motif 11">
    <location>
        <begin position="585"/>
        <end position="589"/>
    </location>
</feature>
<feature type="compositionally biased region" description="Low complexity" evidence="3">
    <location>
        <begin position="7"/>
        <end position="16"/>
    </location>
</feature>
<feature type="compositionally biased region" description="Pro residues" evidence="3">
    <location>
        <begin position="646"/>
        <end position="657"/>
    </location>
</feature>
<feature type="compositionally biased region" description="Polar residues" evidence="3">
    <location>
        <begin position="694"/>
        <end position="704"/>
    </location>
</feature>
<feature type="compositionally biased region" description="Acidic residues" evidence="3">
    <location>
        <begin position="786"/>
        <end position="798"/>
    </location>
</feature>
<feature type="compositionally biased region" description="Pro residues" evidence="3">
    <location>
        <begin position="809"/>
        <end position="834"/>
    </location>
</feature>
<feature type="compositionally biased region" description="Pro residues" evidence="3">
    <location>
        <begin position="845"/>
        <end position="870"/>
    </location>
</feature>
<feature type="compositionally biased region" description="Acidic residues" evidence="3">
    <location>
        <begin position="896"/>
        <end position="967"/>
    </location>
</feature>
<feature type="compositionally biased region" description="Pro residues" evidence="3">
    <location>
        <begin position="978"/>
        <end position="992"/>
    </location>
</feature>
<feature type="modified residue" description="N-acetylalanine" evidence="1">
    <location>
        <position position="2"/>
    </location>
</feature>
<feature type="modified residue" description="Phosphoserine" evidence="2">
    <location>
        <position position="13"/>
    </location>
</feature>
<feature type="modified residue" description="Phosphoserine" evidence="1">
    <location>
        <position position="478"/>
    </location>
</feature>
<feature type="modified residue" description="Phosphoserine" evidence="1">
    <location>
        <position position="482"/>
    </location>
</feature>
<feature type="modified residue" description="Phosphothreonine" evidence="1">
    <location>
        <position position="757"/>
    </location>
</feature>
<feature type="modified residue" description="Phosphoserine" evidence="2">
    <location>
        <position position="761"/>
    </location>
</feature>
<feature type="modified residue" description="Phosphoserine" evidence="1">
    <location>
        <position position="1034"/>
    </location>
</feature>
<feature type="modified residue" description="Phosphoserine" evidence="1">
    <location>
        <position position="1044"/>
    </location>
</feature>
<feature type="sequence conflict" description="In Ref. 2; AAI01891." evidence="5" ref="2">
    <original>Q</original>
    <variation>E</variation>
    <location>
        <position position="190"/>
    </location>
</feature>
<feature type="sequence conflict" description="In Ref. 2; AAI01891." evidence="5" ref="2">
    <original>D</original>
    <variation>N</variation>
    <location>
        <position position="519"/>
    </location>
</feature>
<feature type="sequence conflict" description="In Ref. 2; AAI01891." evidence="5" ref="2">
    <original>I</original>
    <variation>T</variation>
    <location>
        <position position="824"/>
    </location>
</feature>
<feature type="sequence conflict" description="In Ref. 2; AAI01891." evidence="5" ref="2">
    <original>V</original>
    <variation>E</variation>
    <location>
        <position position="913"/>
    </location>
</feature>
<gene>
    <name type="primary">Pelp1</name>
    <name type="synonym">Mnar</name>
</gene>
<proteinExistence type="evidence at protein level"/>
<evidence type="ECO:0000250" key="1">
    <source>
        <dbReference type="UniProtKB" id="Q8IZL8"/>
    </source>
</evidence>
<evidence type="ECO:0000250" key="2">
    <source>
        <dbReference type="UniProtKB" id="Q9DBD5"/>
    </source>
</evidence>
<evidence type="ECO:0000256" key="3">
    <source>
        <dbReference type="SAM" id="MobiDB-lite"/>
    </source>
</evidence>
<evidence type="ECO:0000269" key="4">
    <source>
    </source>
</evidence>
<evidence type="ECO:0000305" key="5"/>
<organism>
    <name type="scientific">Rattus norvegicus</name>
    <name type="common">Rat</name>
    <dbReference type="NCBI Taxonomy" id="10116"/>
    <lineage>
        <taxon>Eukaryota</taxon>
        <taxon>Metazoa</taxon>
        <taxon>Chordata</taxon>
        <taxon>Craniata</taxon>
        <taxon>Vertebrata</taxon>
        <taxon>Euteleostomi</taxon>
        <taxon>Mammalia</taxon>
        <taxon>Eutheria</taxon>
        <taxon>Euarchontoglires</taxon>
        <taxon>Glires</taxon>
        <taxon>Rodentia</taxon>
        <taxon>Myomorpha</taxon>
        <taxon>Muroidea</taxon>
        <taxon>Muridae</taxon>
        <taxon>Murinae</taxon>
        <taxon>Rattus</taxon>
    </lineage>
</organism>
<reference key="1">
    <citation type="journal article" date="2005" name="Endocrinology">
        <title>Cloning, expression, and localization of MNAR/PELP1 in rodent brain: colocalization in estrogen receptor-alpha- but not in gonadotropin-releasing hormone-positive neurons.</title>
        <authorList>
            <person name="Khan M.M."/>
            <person name="Hadman M."/>
            <person name="Wakade C."/>
            <person name="De Sevilla L.M."/>
            <person name="Dhandapani K.M."/>
            <person name="Mahesh V.B."/>
            <person name="Vadlamudi R.K."/>
            <person name="Brann D.W."/>
        </authorList>
    </citation>
    <scope>NUCLEOTIDE SEQUENCE [MRNA]</scope>
    <scope>SUBCELLULAR LOCATION</scope>
    <scope>TISSUE SPECIFICITY</scope>
    <source>
        <strain>Sprague-Dawley</strain>
        <tissue>Hypothalamus</tissue>
    </source>
</reference>
<reference key="2">
    <citation type="journal article" date="2004" name="Genome Res.">
        <title>The status, quality, and expansion of the NIH full-length cDNA project: the Mammalian Gene Collection (MGC).</title>
        <authorList>
            <consortium name="The MGC Project Team"/>
        </authorList>
    </citation>
    <scope>NUCLEOTIDE SEQUENCE [LARGE SCALE MRNA]</scope>
    <source>
        <tissue>Prostate</tissue>
    </source>
</reference>
<reference key="3">
    <citation type="journal article" date="2012" name="Nat. Commun.">
        <title>Quantitative maps of protein phosphorylation sites across 14 different rat organs and tissues.</title>
        <authorList>
            <person name="Lundby A."/>
            <person name="Secher A."/>
            <person name="Lage K."/>
            <person name="Nordsborg N.B."/>
            <person name="Dmytriyev A."/>
            <person name="Lundby C."/>
            <person name="Olsen J.V."/>
        </authorList>
    </citation>
    <scope>IDENTIFICATION BY MASS SPECTROMETRY [LARGE SCALE ANALYSIS]</scope>
</reference>
<accession>Q56B11</accession>
<accession>Q3MIE2</accession>
<dbReference type="EMBL" id="AY970831">
    <property type="protein sequence ID" value="AAX81519.2"/>
    <property type="molecule type" value="mRNA"/>
</dbReference>
<dbReference type="EMBL" id="BC101890">
    <property type="protein sequence ID" value="AAI01891.1"/>
    <property type="molecule type" value="mRNA"/>
</dbReference>
<dbReference type="RefSeq" id="NP_001019441.2">
    <property type="nucleotide sequence ID" value="NM_001024270.2"/>
</dbReference>
<dbReference type="SMR" id="Q56B11"/>
<dbReference type="BioGRID" id="262017">
    <property type="interactions" value="1"/>
</dbReference>
<dbReference type="FunCoup" id="Q56B11">
    <property type="interactions" value="2403"/>
</dbReference>
<dbReference type="IntAct" id="Q56B11">
    <property type="interactions" value="3"/>
</dbReference>
<dbReference type="MINT" id="Q56B11"/>
<dbReference type="STRING" id="10116.ENSRNOP00000026102"/>
<dbReference type="GlyGen" id="Q56B11">
    <property type="glycosylation" value="9 sites"/>
</dbReference>
<dbReference type="iPTMnet" id="Q56B11"/>
<dbReference type="PhosphoSitePlus" id="Q56B11"/>
<dbReference type="jPOST" id="Q56B11"/>
<dbReference type="PaxDb" id="10116-ENSRNOP00000026102"/>
<dbReference type="GeneID" id="360552"/>
<dbReference type="KEGG" id="rno:360552"/>
<dbReference type="UCSC" id="RGD:1306320">
    <property type="organism name" value="rat"/>
</dbReference>
<dbReference type="AGR" id="RGD:1306320"/>
<dbReference type="CTD" id="27043"/>
<dbReference type="RGD" id="1306320">
    <property type="gene designation" value="Pelp1"/>
</dbReference>
<dbReference type="eggNOG" id="ENOG502QQE7">
    <property type="taxonomic scope" value="Eukaryota"/>
</dbReference>
<dbReference type="InParanoid" id="Q56B11"/>
<dbReference type="OrthoDB" id="91724at9989"/>
<dbReference type="PhylomeDB" id="Q56B11"/>
<dbReference type="TreeFam" id="TF331332"/>
<dbReference type="Reactome" id="R-RNO-6791226">
    <property type="pathway name" value="Major pathway of rRNA processing in the nucleolus and cytosol"/>
</dbReference>
<dbReference type="PRO" id="PR:Q56B11"/>
<dbReference type="Proteomes" id="UP000002494">
    <property type="component" value="Unplaced"/>
</dbReference>
<dbReference type="GO" id="GO:0005737">
    <property type="term" value="C:cytoplasm"/>
    <property type="evidence" value="ECO:0007669"/>
    <property type="project" value="UniProtKB-SubCell"/>
</dbReference>
<dbReference type="GO" id="GO:0000791">
    <property type="term" value="C:euchromatin"/>
    <property type="evidence" value="ECO:0000250"/>
    <property type="project" value="UniProtKB"/>
</dbReference>
<dbReference type="GO" id="GO:0071339">
    <property type="term" value="C:MLL1 complex"/>
    <property type="evidence" value="ECO:0000250"/>
    <property type="project" value="UniProtKB"/>
</dbReference>
<dbReference type="GO" id="GO:0005730">
    <property type="term" value="C:nucleolus"/>
    <property type="evidence" value="ECO:0007669"/>
    <property type="project" value="UniProtKB-SubCell"/>
</dbReference>
<dbReference type="GO" id="GO:0005634">
    <property type="term" value="C:nucleus"/>
    <property type="evidence" value="ECO:0000266"/>
    <property type="project" value="RGD"/>
</dbReference>
<dbReference type="GO" id="GO:0003682">
    <property type="term" value="F:chromatin binding"/>
    <property type="evidence" value="ECO:0000250"/>
    <property type="project" value="UniProtKB"/>
</dbReference>
<dbReference type="GO" id="GO:0032183">
    <property type="term" value="F:SUMO binding"/>
    <property type="evidence" value="ECO:0000266"/>
    <property type="project" value="RGD"/>
</dbReference>
<dbReference type="GO" id="GO:0071391">
    <property type="term" value="P:cellular response to estrogen stimulus"/>
    <property type="evidence" value="ECO:0000250"/>
    <property type="project" value="UniProtKB"/>
</dbReference>
<dbReference type="GO" id="GO:0045944">
    <property type="term" value="P:positive regulation of transcription by RNA polymerase II"/>
    <property type="evidence" value="ECO:0000250"/>
    <property type="project" value="UniProtKB"/>
</dbReference>
<dbReference type="GO" id="GO:0006364">
    <property type="term" value="P:rRNA processing"/>
    <property type="evidence" value="ECO:0000318"/>
    <property type="project" value="GO_Central"/>
</dbReference>
<dbReference type="FunFam" id="1.25.10.10:FF:001118">
    <property type="entry name" value="Proline-, glutamic acid- and leucine-rich protein 1"/>
    <property type="match status" value="1"/>
</dbReference>
<dbReference type="Gene3D" id="1.25.10.10">
    <property type="entry name" value="Leucine-rich Repeat Variant"/>
    <property type="match status" value="1"/>
</dbReference>
<dbReference type="InterPro" id="IPR011989">
    <property type="entry name" value="ARM-like"/>
</dbReference>
<dbReference type="InterPro" id="IPR016024">
    <property type="entry name" value="ARM-type_fold"/>
</dbReference>
<dbReference type="InterPro" id="IPR012980">
    <property type="entry name" value="PELP1_middle"/>
</dbReference>
<dbReference type="InterPro" id="IPR012583">
    <property type="entry name" value="RIX1_N"/>
</dbReference>
<dbReference type="PANTHER" id="PTHR34105">
    <property type="entry name" value="PROLINE-, GLUTAMIC ACID- AND LEUCINE-RICH PROTEIN 1"/>
    <property type="match status" value="1"/>
</dbReference>
<dbReference type="PANTHER" id="PTHR34105:SF1">
    <property type="entry name" value="PROLINE-, GLUTAMIC ACID- AND LEUCINE-RICH PROTEIN 1"/>
    <property type="match status" value="1"/>
</dbReference>
<dbReference type="Pfam" id="PF08166">
    <property type="entry name" value="PELP1_HEAT"/>
    <property type="match status" value="2"/>
</dbReference>
<dbReference type="Pfam" id="PF08167">
    <property type="entry name" value="RIX1"/>
    <property type="match status" value="1"/>
</dbReference>
<dbReference type="PRINTS" id="PR01217">
    <property type="entry name" value="PRICHEXTENSN"/>
</dbReference>
<dbReference type="SUPFAM" id="SSF48371">
    <property type="entry name" value="ARM repeat"/>
    <property type="match status" value="1"/>
</dbReference>
<keyword id="KW-0007">Acetylation</keyword>
<keyword id="KW-0010">Activator</keyword>
<keyword id="KW-0963">Cytoplasm</keyword>
<keyword id="KW-0539">Nucleus</keyword>
<keyword id="KW-0597">Phosphoprotein</keyword>
<keyword id="KW-1185">Reference proteome</keyword>
<keyword id="KW-0677">Repeat</keyword>
<keyword id="KW-0678">Repressor</keyword>
<keyword id="KW-0804">Transcription</keyword>
<keyword id="KW-0832">Ubl conjugation</keyword>
<comment type="function">
    <text evidence="1">Coactivator of estrogen receptor-mediated transcription and a corepressor of other nuclear hormone receptors and sequence-specific transcription factors. Plays a role in estrogen receptor (ER) genomic activity when present in the nuclear compartment by activating the ER target genes in a hormonal stimulation dependent manner. Can facilitate ER non-genomic signaling via SRC and PI3K interaction in the cytosol. Plays a role in E2-mediated cell cycle progression by interacting with RB1. May have important functional implications in ER/growth factor cross-talk. Interacts with several growth factor signaling components including EGFR and HRS. Functions as the key stabilizing component of the Five Friends of Methylated CHTOP (5FMC) complex; the 5FMC complex is recruited to ZNF148 by methylated CHTOP, leading to desumoylation of ZNF148 and subsequent transactivation of ZNF148 target genes. Component of the PELP1 complex involved in the nucleolar steps of 28S rRNA maturation and the subsequent nucleoplasmic transit of the pre-60S ribosomal subunit. Regulates pre-60S association of the critical remodeling factor MDN1.</text>
</comment>
<comment type="subunit">
    <text evidence="1">Interacts with HRS, RXRA, SUMO2, HDAC2, RB1 and STAT3. Interacts with PI3K, SRC and EGFR in cytoplasm. Interacts with ESR1, the interaction is enhanced by 17-beta-estradiol; the interaction increases ESR1 transcriptional activity (By similarity). Interacts with CREBBP and EP300 in a ligand-dependent manner (By similarity). Forms two complexes in the presence of 17-beta-estradiol; one with SRC and ESR1 and another with LCK and ESR1. Interacts with histone H1 and H3 with a greater affinity for H1. Component of some MLL1/MLL complex, at least composed of the core components KMT2A/MLL1, ASH2L, HCFC1/HCF1, WDR5 and RBBP5, as well as the facultative components BACC1, CHD8, E2F6, HSP70, INO80C, KANSL1, LAS1L, MAX, MCRS1, MGA, KAT8/MOF, PELP1, PHF20, PRP31, RING2, RUVB1/TIP49A, RUVB2/TIP49B, SENP3, TAF1, TAF4, TAF6, TAF7, TAF9 and TEX10. Core component of the 5FMC complex, at least composed of PELP1, LAS1L, TEX10, WDR18 and SENP3; the complex interacts with methylated CHTOP and ZNF148. Interacts with NOL9. Interacts with BCAS3. Component of the PELP1 complex, composed of at least PELP1, TEX10 and WDR18. The complex interacts (via PELP1) with MDN1 (via its hexameric AAA ATPase ring) and the pre-60S ribosome particles.</text>
</comment>
<comment type="subcellular location">
    <subcellularLocation>
        <location evidence="1">Nucleus</location>
        <location evidence="1">Nucleolus</location>
    </subcellularLocation>
    <subcellularLocation>
        <location evidence="1">Nucleus</location>
        <location evidence="1">Nucleoplasm</location>
    </subcellularLocation>
    <subcellularLocation>
        <location evidence="4">Nucleus</location>
    </subcellularLocation>
    <subcellularLocation>
        <location evidence="4">Cytoplasm</location>
    </subcellularLocation>
    <text evidence="1">Mainly found in the nucleoplasm, with low levels detected in the cytoplasm. Also found associated with the plasma membrane.</text>
</comment>
<comment type="tissue specificity">
    <text evidence="4">Expressed in ovary, uterus, muscle and many regions of brain including hypothalamus, cortex, hippocampus and pituitary. Expressed in neurin and glia cells.</text>
</comment>
<comment type="domain">
    <text evidence="1">The Glu-rich region mediates histones interaction.</text>
</comment>
<comment type="domain">
    <text evidence="1">The Leu-Xaa-Xaa-Leu-Leu (LXXLL) motifs are required for the association with nuclear receptor ESR1.</text>
</comment>
<comment type="PTM">
    <text evidence="1">Transiently sumoylated, preferentially conjugated to SUMO2 or SUMO3. Sumoylation causes nucleolar exclusion of PELP1 and promotes the recruitment of MDN1 to pre-60S particles. Desumoylation by SUMO isopeptidase SENP3 is needed to release both PELP1 and MDN1 from pre-ribosomes.</text>
</comment>
<comment type="similarity">
    <text evidence="5">Belongs to the RIX1/PELP1 family.</text>
</comment>
<protein>
    <recommendedName>
        <fullName>Proline-, glutamic acid- and leucine-rich protein 1</fullName>
    </recommendedName>
    <alternativeName>
        <fullName>Modulator of non-genomic activity of estrogen receptor</fullName>
    </alternativeName>
</protein>